<comment type="function">
    <text evidence="1">Serine protease inhibitor that plays an essential role in male reproduction and fertility. Modulates the hydrolysis of SEMG1 by KLK3/PSA (a serine protease), provides antimicrobial protection for spermatozoa in the ejaculate coagulum, and binds SEMG1 thereby inhibiting sperm motility (By similarity).</text>
</comment>
<comment type="subunit">
    <text evidence="1">Monomer. Homodimer. Homomultimers. Interacts with SEMG1 (via 164-283 AA). Interacts with LTF. Found in a complex with LTF, CLU, EPPIN and SEMG1.</text>
</comment>
<comment type="subcellular location">
    <subcellularLocation>
        <location evidence="5">Secreted</location>
    </subcellularLocation>
    <text evidence="1">Bound to the surface of testicular and on the head and tail of ejaculate spermatozoa.</text>
</comment>
<accession>Q9BDL1</accession>
<keyword id="KW-0929">Antimicrobial</keyword>
<keyword id="KW-1015">Disulfide bond</keyword>
<keyword id="KW-0646">Protease inhibitor</keyword>
<keyword id="KW-1185">Reference proteome</keyword>
<keyword id="KW-0964">Secreted</keyword>
<keyword id="KW-0722">Serine protease inhibitor</keyword>
<keyword id="KW-0732">Signal</keyword>
<protein>
    <recommendedName>
        <fullName>Eppin</fullName>
    </recommendedName>
    <alternativeName>
        <fullName>Epididymal protease inhibitor</fullName>
    </alternativeName>
    <alternativeName>
        <fullName>Serine protease inhibitor-like with Kunitz and WAP domains 1</fullName>
    </alternativeName>
</protein>
<name>EPPI_MACMU</name>
<organism>
    <name type="scientific">Macaca mulatta</name>
    <name type="common">Rhesus macaque</name>
    <dbReference type="NCBI Taxonomy" id="9544"/>
    <lineage>
        <taxon>Eukaryota</taxon>
        <taxon>Metazoa</taxon>
        <taxon>Chordata</taxon>
        <taxon>Craniata</taxon>
        <taxon>Vertebrata</taxon>
        <taxon>Euteleostomi</taxon>
        <taxon>Mammalia</taxon>
        <taxon>Eutheria</taxon>
        <taxon>Euarchontoglires</taxon>
        <taxon>Primates</taxon>
        <taxon>Haplorrhini</taxon>
        <taxon>Catarrhini</taxon>
        <taxon>Cercopithecidae</taxon>
        <taxon>Cercopithecinae</taxon>
        <taxon>Macaca</taxon>
    </lineage>
</organism>
<reference key="1">
    <citation type="submission" date="2001-02" db="EMBL/GenBank/DDBJ databases">
        <title>Characterization of monkey and mouse Eppin, a protease inhibitor from epididymis and testis.</title>
        <authorList>
            <person name="Sivashanmugam P."/>
            <person name="Hall S.H."/>
            <person name="Hamil K.G."/>
            <person name="French F.S."/>
            <person name="O'Rand M.G."/>
            <person name="Richardson R.T."/>
        </authorList>
    </citation>
    <scope>NUCLEOTIDE SEQUENCE [MRNA]</scope>
    <source>
        <tissue>Epididymis</tissue>
        <tissue>Testis</tissue>
    </source>
</reference>
<evidence type="ECO:0000250" key="1"/>
<evidence type="ECO:0000255" key="2"/>
<evidence type="ECO:0000255" key="3">
    <source>
        <dbReference type="PROSITE-ProRule" id="PRU00031"/>
    </source>
</evidence>
<evidence type="ECO:0000255" key="4">
    <source>
        <dbReference type="PROSITE-ProRule" id="PRU00722"/>
    </source>
</evidence>
<evidence type="ECO:0000305" key="5"/>
<gene>
    <name type="primary">EPPIN</name>
    <name type="synonym">SPINLW1</name>
</gene>
<dbReference type="EMBL" id="AF346414">
    <property type="protein sequence ID" value="AAK31336.1"/>
    <property type="molecule type" value="mRNA"/>
</dbReference>
<dbReference type="RefSeq" id="NP_001028013.1">
    <property type="nucleotide sequence ID" value="NM_001032841.1"/>
</dbReference>
<dbReference type="FunCoup" id="Q9BDL1">
    <property type="interactions" value="5"/>
</dbReference>
<dbReference type="STRING" id="9544.ENSMMUP00000005072"/>
<dbReference type="MEROPS" id="I02.058"/>
<dbReference type="MEROPS" id="I17.953"/>
<dbReference type="PaxDb" id="9544-ENSMMUP00000005074"/>
<dbReference type="GeneID" id="574162"/>
<dbReference type="KEGG" id="mcc:574162"/>
<dbReference type="CTD" id="768002"/>
<dbReference type="eggNOG" id="KOG4295">
    <property type="taxonomic scope" value="Eukaryota"/>
</dbReference>
<dbReference type="InParanoid" id="Q9BDL1"/>
<dbReference type="OrthoDB" id="4473401at2759"/>
<dbReference type="Proteomes" id="UP000006718">
    <property type="component" value="Unassembled WGS sequence"/>
</dbReference>
<dbReference type="GO" id="GO:0005615">
    <property type="term" value="C:extracellular space"/>
    <property type="evidence" value="ECO:0000318"/>
    <property type="project" value="GO_Central"/>
</dbReference>
<dbReference type="GO" id="GO:0004867">
    <property type="term" value="F:serine-type endopeptidase inhibitor activity"/>
    <property type="evidence" value="ECO:0007669"/>
    <property type="project" value="UniProtKB-KW"/>
</dbReference>
<dbReference type="GO" id="GO:0042742">
    <property type="term" value="P:defense response to bacterium"/>
    <property type="evidence" value="ECO:0000250"/>
    <property type="project" value="UniProtKB"/>
</dbReference>
<dbReference type="GO" id="GO:1901318">
    <property type="term" value="P:negative regulation of flagellated sperm motility"/>
    <property type="evidence" value="ECO:0000318"/>
    <property type="project" value="GO_Central"/>
</dbReference>
<dbReference type="GO" id="GO:0010466">
    <property type="term" value="P:negative regulation of peptidase activity"/>
    <property type="evidence" value="ECO:0000250"/>
    <property type="project" value="UniProtKB"/>
</dbReference>
<dbReference type="CDD" id="cd22611">
    <property type="entry name" value="Kunitz_eppin"/>
    <property type="match status" value="1"/>
</dbReference>
<dbReference type="FunFam" id="4.10.410.10:FF:000015">
    <property type="entry name" value="WAP four-disulfide core domain 6A"/>
    <property type="match status" value="1"/>
</dbReference>
<dbReference type="FunFam" id="4.10.75.10:FF:000004">
    <property type="entry name" value="WAP four-disulfide core domain 6A"/>
    <property type="match status" value="1"/>
</dbReference>
<dbReference type="Gene3D" id="4.10.75.10">
    <property type="entry name" value="Elafin-like"/>
    <property type="match status" value="1"/>
</dbReference>
<dbReference type="Gene3D" id="4.10.410.10">
    <property type="entry name" value="Pancreatic trypsin inhibitor Kunitz domain"/>
    <property type="match status" value="1"/>
</dbReference>
<dbReference type="InterPro" id="IPR036645">
    <property type="entry name" value="Elafin-like_sf"/>
</dbReference>
<dbReference type="InterPro" id="IPR002223">
    <property type="entry name" value="Kunitz_BPTI"/>
</dbReference>
<dbReference type="InterPro" id="IPR036880">
    <property type="entry name" value="Kunitz_BPTI_sf"/>
</dbReference>
<dbReference type="InterPro" id="IPR020901">
    <property type="entry name" value="Prtase_inh_Kunz-CS"/>
</dbReference>
<dbReference type="InterPro" id="IPR051388">
    <property type="entry name" value="Serpin_venom_toxin"/>
</dbReference>
<dbReference type="InterPro" id="IPR008197">
    <property type="entry name" value="WAP_dom"/>
</dbReference>
<dbReference type="PANTHER" id="PTHR46751">
    <property type="entry name" value="EPPIN"/>
    <property type="match status" value="1"/>
</dbReference>
<dbReference type="PANTHER" id="PTHR46751:SF2">
    <property type="entry name" value="EPPIN"/>
    <property type="match status" value="1"/>
</dbReference>
<dbReference type="Pfam" id="PF00014">
    <property type="entry name" value="Kunitz_BPTI"/>
    <property type="match status" value="1"/>
</dbReference>
<dbReference type="Pfam" id="PF00095">
    <property type="entry name" value="WAP"/>
    <property type="match status" value="1"/>
</dbReference>
<dbReference type="PRINTS" id="PR00759">
    <property type="entry name" value="BASICPTASE"/>
</dbReference>
<dbReference type="SMART" id="SM00131">
    <property type="entry name" value="KU"/>
    <property type="match status" value="1"/>
</dbReference>
<dbReference type="SUPFAM" id="SSF57362">
    <property type="entry name" value="BPTI-like"/>
    <property type="match status" value="1"/>
</dbReference>
<dbReference type="SUPFAM" id="SSF57256">
    <property type="entry name" value="Elafin-like"/>
    <property type="match status" value="1"/>
</dbReference>
<dbReference type="PROSITE" id="PS00280">
    <property type="entry name" value="BPTI_KUNITZ_1"/>
    <property type="match status" value="1"/>
</dbReference>
<dbReference type="PROSITE" id="PS50279">
    <property type="entry name" value="BPTI_KUNITZ_2"/>
    <property type="match status" value="1"/>
</dbReference>
<dbReference type="PROSITE" id="PS51390">
    <property type="entry name" value="WAP"/>
    <property type="match status" value="1"/>
</dbReference>
<sequence>MGSSGLLSLLVLFILLVNVQGPGLTDWLFPRRCPTIREECEFRERDVCTRHRQCPDNKKCCVFSCGKKCLDLKQDVCEMPNETGPCLAFFIRWWYDKKNNTCSTFVHGGCQGNNNNFQSEANCLNTCKNKRFP</sequence>
<proteinExistence type="evidence at transcript level"/>
<feature type="signal peptide" evidence="2">
    <location>
        <begin position="1"/>
        <end position="21"/>
    </location>
</feature>
<feature type="chain" id="PRO_0000041379" description="Eppin">
    <location>
        <begin position="22"/>
        <end position="133"/>
    </location>
</feature>
<feature type="domain" description="WAP" evidence="4">
    <location>
        <begin position="26"/>
        <end position="73"/>
    </location>
</feature>
<feature type="domain" description="BPTI/Kunitz inhibitor" evidence="3">
    <location>
        <begin position="77"/>
        <end position="127"/>
    </location>
</feature>
<feature type="region of interest" description="Interaction with SEMG1" evidence="1">
    <location>
        <begin position="102"/>
        <end position="133"/>
    </location>
</feature>
<feature type="region of interest" description="Interaction with LTF" evidence="1">
    <location>
        <begin position="117"/>
        <end position="133"/>
    </location>
</feature>
<feature type="disulfide bond" evidence="1">
    <location>
        <begin position="33"/>
        <end position="61"/>
    </location>
</feature>
<feature type="disulfide bond" evidence="1">
    <location>
        <begin position="40"/>
        <end position="65"/>
    </location>
</feature>
<feature type="disulfide bond" evidence="1">
    <location>
        <begin position="48"/>
        <end position="60"/>
    </location>
</feature>
<feature type="disulfide bond" evidence="1">
    <location>
        <begin position="54"/>
        <end position="69"/>
    </location>
</feature>
<feature type="disulfide bond" evidence="1">
    <location>
        <begin position="77"/>
        <end position="127"/>
    </location>
</feature>
<feature type="disulfide bond" evidence="1">
    <location>
        <begin position="86"/>
        <end position="110"/>
    </location>
</feature>
<feature type="disulfide bond" evidence="1">
    <location>
        <begin position="102"/>
        <end position="123"/>
    </location>
</feature>